<reference key="1">
    <citation type="journal article" date="2004" name="Nature">
        <title>Genome evolution in yeasts.</title>
        <authorList>
            <person name="Dujon B."/>
            <person name="Sherman D."/>
            <person name="Fischer G."/>
            <person name="Durrens P."/>
            <person name="Casaregola S."/>
            <person name="Lafontaine I."/>
            <person name="de Montigny J."/>
            <person name="Marck C."/>
            <person name="Neuveglise C."/>
            <person name="Talla E."/>
            <person name="Goffard N."/>
            <person name="Frangeul L."/>
            <person name="Aigle M."/>
            <person name="Anthouard V."/>
            <person name="Babour A."/>
            <person name="Barbe V."/>
            <person name="Barnay S."/>
            <person name="Blanchin S."/>
            <person name="Beckerich J.-M."/>
            <person name="Beyne E."/>
            <person name="Bleykasten C."/>
            <person name="Boisrame A."/>
            <person name="Boyer J."/>
            <person name="Cattolico L."/>
            <person name="Confanioleri F."/>
            <person name="de Daruvar A."/>
            <person name="Despons L."/>
            <person name="Fabre E."/>
            <person name="Fairhead C."/>
            <person name="Ferry-Dumazet H."/>
            <person name="Groppi A."/>
            <person name="Hantraye F."/>
            <person name="Hennequin C."/>
            <person name="Jauniaux N."/>
            <person name="Joyet P."/>
            <person name="Kachouri R."/>
            <person name="Kerrest A."/>
            <person name="Koszul R."/>
            <person name="Lemaire M."/>
            <person name="Lesur I."/>
            <person name="Ma L."/>
            <person name="Muller H."/>
            <person name="Nicaud J.-M."/>
            <person name="Nikolski M."/>
            <person name="Oztas S."/>
            <person name="Ozier-Kalogeropoulos O."/>
            <person name="Pellenz S."/>
            <person name="Potier S."/>
            <person name="Richard G.-F."/>
            <person name="Straub M.-L."/>
            <person name="Suleau A."/>
            <person name="Swennen D."/>
            <person name="Tekaia F."/>
            <person name="Wesolowski-Louvel M."/>
            <person name="Westhof E."/>
            <person name="Wirth B."/>
            <person name="Zeniou-Meyer M."/>
            <person name="Zivanovic Y."/>
            <person name="Bolotin-Fukuhara M."/>
            <person name="Thierry A."/>
            <person name="Bouchier C."/>
            <person name="Caudron B."/>
            <person name="Scarpelli C."/>
            <person name="Gaillardin C."/>
            <person name="Weissenbach J."/>
            <person name="Wincker P."/>
            <person name="Souciet J.-L."/>
        </authorList>
    </citation>
    <scope>NUCLEOTIDE SEQUENCE [LARGE SCALE GENOMIC DNA]</scope>
    <source>
        <strain>ATCC 2001 / BCRC 20586 / JCM 3761 / NBRC 0622 / NRRL Y-65 / CBS 138</strain>
    </source>
</reference>
<name>GPD2_CANGA</name>
<sequence length="422" mass="47005">MFVRLARIPRITRHYRLGLFSTQPKPKPNEYLYYRNKHKSKMEAPIKRSSSAVSLVELEREPFKVTVIGSGNWGTTIAKVVAENTKANPQVFQERVDMWVFDENIDGTMLTEIINTKHQNVKYLPNIDLPENLVANPDLLKSVEGADILVFNIPHQFLPKIVDQLRGHVEPHVRAISCLKGFEVGKKGVQLLSTYITEELGIECGALSGANLAPEVAKEHWSETTVAYHIPKDYQGDGMDVDHKVLKLLFHRPYFHVSVIDDVAGISIAGALKNVVALGCGFVEGLGWGNNAAAAIQRVGLGEIIKFGQMFFPESRVETYYQESAGVADLITTCSGGRNVRVATHMAKTGKSAEDSEKELLNGQSAQGVITCKEVHEWLSTCEMIEEFPLFEAVYKIVYEDVPMHKLPEMIEELDDIVVAGQ</sequence>
<keyword id="KW-0520">NAD</keyword>
<keyword id="KW-0560">Oxidoreductase</keyword>
<keyword id="KW-1185">Reference proteome</keyword>
<gene>
    <name type="primary">GPD2</name>
    <name type="ordered locus">CAGL0C05137g</name>
</gene>
<comment type="catalytic activity">
    <reaction>
        <text>sn-glycerol 3-phosphate + NAD(+) = dihydroxyacetone phosphate + NADH + H(+)</text>
        <dbReference type="Rhea" id="RHEA:11092"/>
        <dbReference type="ChEBI" id="CHEBI:15378"/>
        <dbReference type="ChEBI" id="CHEBI:57540"/>
        <dbReference type="ChEBI" id="CHEBI:57597"/>
        <dbReference type="ChEBI" id="CHEBI:57642"/>
        <dbReference type="ChEBI" id="CHEBI:57945"/>
        <dbReference type="EC" id="1.1.1.8"/>
    </reaction>
</comment>
<comment type="similarity">
    <text evidence="2">Belongs to the NAD-dependent glycerol-3-phosphate dehydrogenase family.</text>
</comment>
<organism>
    <name type="scientific">Candida glabrata (strain ATCC 2001 / BCRC 20586 / JCM 3761 / NBRC 0622 / NRRL Y-65 / CBS 138)</name>
    <name type="common">Yeast</name>
    <name type="synonym">Nakaseomyces glabratus</name>
    <dbReference type="NCBI Taxonomy" id="284593"/>
    <lineage>
        <taxon>Eukaryota</taxon>
        <taxon>Fungi</taxon>
        <taxon>Dikarya</taxon>
        <taxon>Ascomycota</taxon>
        <taxon>Saccharomycotina</taxon>
        <taxon>Saccharomycetes</taxon>
        <taxon>Saccharomycetales</taxon>
        <taxon>Saccharomycetaceae</taxon>
        <taxon>Nakaseomyces</taxon>
    </lineage>
</organism>
<dbReference type="EC" id="1.1.1.8"/>
<dbReference type="EMBL" id="CR380949">
    <property type="protein sequence ID" value="CAG58303.1"/>
    <property type="molecule type" value="Genomic_DNA"/>
</dbReference>
<dbReference type="RefSeq" id="XP_445397.1">
    <property type="nucleotide sequence ID" value="XM_445397.1"/>
</dbReference>
<dbReference type="SMR" id="Q6FWJ7"/>
<dbReference type="FunCoup" id="Q6FWJ7">
    <property type="interactions" value="600"/>
</dbReference>
<dbReference type="STRING" id="284593.Q6FWJ7"/>
<dbReference type="EnsemblFungi" id="CAGL0C05137g-T">
    <property type="protein sequence ID" value="CAGL0C05137g-T-p1"/>
    <property type="gene ID" value="CAGL0C05137g"/>
</dbReference>
<dbReference type="GeneID" id="2886789"/>
<dbReference type="KEGG" id="cgr:2886789"/>
<dbReference type="CGD" id="CAL0127442">
    <property type="gene designation" value="GPD2"/>
</dbReference>
<dbReference type="VEuPathDB" id="FungiDB:B1J91_C05137g"/>
<dbReference type="VEuPathDB" id="FungiDB:CAGL0C05137g"/>
<dbReference type="eggNOG" id="KOG2711">
    <property type="taxonomic scope" value="Eukaryota"/>
</dbReference>
<dbReference type="HOGENOM" id="CLU_033449_2_4_1"/>
<dbReference type="InParanoid" id="Q6FWJ7"/>
<dbReference type="OMA" id="YDTPPMD"/>
<dbReference type="Proteomes" id="UP000002428">
    <property type="component" value="Chromosome C"/>
</dbReference>
<dbReference type="GO" id="GO:0005829">
    <property type="term" value="C:cytosol"/>
    <property type="evidence" value="ECO:0000314"/>
    <property type="project" value="CGD"/>
</dbReference>
<dbReference type="GO" id="GO:0062040">
    <property type="term" value="C:fungal biofilm matrix"/>
    <property type="evidence" value="ECO:0000314"/>
    <property type="project" value="CGD"/>
</dbReference>
<dbReference type="GO" id="GO:0005634">
    <property type="term" value="C:nucleus"/>
    <property type="evidence" value="ECO:0007669"/>
    <property type="project" value="TreeGrafter"/>
</dbReference>
<dbReference type="GO" id="GO:0141152">
    <property type="term" value="F:glycerol-3-phosphate dehydrogenase (NAD+) activity"/>
    <property type="evidence" value="ECO:0007669"/>
    <property type="project" value="UniProtKB-EC"/>
</dbReference>
<dbReference type="GO" id="GO:0051287">
    <property type="term" value="F:NAD binding"/>
    <property type="evidence" value="ECO:0007669"/>
    <property type="project" value="InterPro"/>
</dbReference>
<dbReference type="GO" id="GO:0042803">
    <property type="term" value="F:protein homodimerization activity"/>
    <property type="evidence" value="ECO:0007669"/>
    <property type="project" value="InterPro"/>
</dbReference>
<dbReference type="GO" id="GO:0005975">
    <property type="term" value="P:carbohydrate metabolic process"/>
    <property type="evidence" value="ECO:0007669"/>
    <property type="project" value="InterPro"/>
</dbReference>
<dbReference type="GO" id="GO:0046168">
    <property type="term" value="P:glycerol-3-phosphate catabolic process"/>
    <property type="evidence" value="ECO:0007669"/>
    <property type="project" value="InterPro"/>
</dbReference>
<dbReference type="FunFam" id="1.10.1040.10:FF:000004">
    <property type="entry name" value="Glycerol-3-phosphate dehydrogenase [NAD(+)]"/>
    <property type="match status" value="1"/>
</dbReference>
<dbReference type="FunFam" id="3.40.50.720:FF:000294">
    <property type="entry name" value="Glycerol-3-phosphate dehydrogenase [NAD(+)]"/>
    <property type="match status" value="1"/>
</dbReference>
<dbReference type="Gene3D" id="1.10.1040.10">
    <property type="entry name" value="N-(1-d-carboxylethyl)-l-norvaline Dehydrogenase, domain 2"/>
    <property type="match status" value="1"/>
</dbReference>
<dbReference type="Gene3D" id="3.40.50.720">
    <property type="entry name" value="NAD(P)-binding Rossmann-like Domain"/>
    <property type="match status" value="1"/>
</dbReference>
<dbReference type="InterPro" id="IPR008927">
    <property type="entry name" value="6-PGluconate_DH-like_C_sf"/>
</dbReference>
<dbReference type="InterPro" id="IPR013328">
    <property type="entry name" value="6PGD_dom2"/>
</dbReference>
<dbReference type="InterPro" id="IPR006168">
    <property type="entry name" value="G3P_DH_NAD-dep"/>
</dbReference>
<dbReference type="InterPro" id="IPR006109">
    <property type="entry name" value="G3P_DH_NAD-dep_C"/>
</dbReference>
<dbReference type="InterPro" id="IPR017751">
    <property type="entry name" value="G3P_DH_NAD-dep_euk"/>
</dbReference>
<dbReference type="InterPro" id="IPR011128">
    <property type="entry name" value="G3P_DH_NAD-dep_N"/>
</dbReference>
<dbReference type="InterPro" id="IPR036291">
    <property type="entry name" value="NAD(P)-bd_dom_sf"/>
</dbReference>
<dbReference type="NCBIfam" id="TIGR03376">
    <property type="entry name" value="glycerol3P_DH"/>
    <property type="match status" value="1"/>
</dbReference>
<dbReference type="PANTHER" id="PTHR11728">
    <property type="entry name" value="GLYCEROL-3-PHOSPHATE DEHYDROGENASE"/>
    <property type="match status" value="1"/>
</dbReference>
<dbReference type="PANTHER" id="PTHR11728:SF8">
    <property type="entry name" value="GLYCEROL-3-PHOSPHATE DEHYDROGENASE [NAD(+)]-RELATED"/>
    <property type="match status" value="1"/>
</dbReference>
<dbReference type="Pfam" id="PF07479">
    <property type="entry name" value="NAD_Gly3P_dh_C"/>
    <property type="match status" value="1"/>
</dbReference>
<dbReference type="Pfam" id="PF01210">
    <property type="entry name" value="NAD_Gly3P_dh_N"/>
    <property type="match status" value="1"/>
</dbReference>
<dbReference type="PRINTS" id="PR00077">
    <property type="entry name" value="GPDHDRGNASE"/>
</dbReference>
<dbReference type="SUPFAM" id="SSF48179">
    <property type="entry name" value="6-phosphogluconate dehydrogenase C-terminal domain-like"/>
    <property type="match status" value="1"/>
</dbReference>
<dbReference type="SUPFAM" id="SSF51735">
    <property type="entry name" value="NAD(P)-binding Rossmann-fold domains"/>
    <property type="match status" value="1"/>
</dbReference>
<dbReference type="PROSITE" id="PS00957">
    <property type="entry name" value="NAD_G3PDH"/>
    <property type="match status" value="1"/>
</dbReference>
<evidence type="ECO:0000250" key="1"/>
<evidence type="ECO:0000305" key="2"/>
<proteinExistence type="inferred from homology"/>
<protein>
    <recommendedName>
        <fullName>Glycerol-3-phosphate dehydrogenase [NAD(+)] 2</fullName>
        <ecNumber>1.1.1.8</ecNumber>
    </recommendedName>
</protein>
<feature type="chain" id="PRO_0000138087" description="Glycerol-3-phosphate dehydrogenase [NAD(+)] 2">
    <location>
        <begin position="1"/>
        <end position="422"/>
    </location>
</feature>
<feature type="active site" description="Proton acceptor" evidence="1">
    <location>
        <position position="273"/>
    </location>
</feature>
<feature type="binding site" evidence="1">
    <location>
        <begin position="69"/>
        <end position="74"/>
    </location>
    <ligand>
        <name>NAD(+)</name>
        <dbReference type="ChEBI" id="CHEBI:57540"/>
    </ligand>
</feature>
<feature type="binding site" evidence="1">
    <location>
        <position position="157"/>
    </location>
    <ligand>
        <name>NAD(+)</name>
        <dbReference type="ChEBI" id="CHEBI:57540"/>
    </ligand>
</feature>
<feature type="binding site" evidence="1">
    <location>
        <position position="180"/>
    </location>
    <ligand>
        <name>NAD(+)</name>
        <dbReference type="ChEBI" id="CHEBI:57540"/>
    </ligand>
</feature>
<feature type="binding site" evidence="1">
    <location>
        <position position="180"/>
    </location>
    <ligand>
        <name>substrate</name>
    </ligand>
</feature>
<feature type="binding site" evidence="1">
    <location>
        <position position="213"/>
    </location>
    <ligand>
        <name>NAD(+)</name>
        <dbReference type="ChEBI" id="CHEBI:57540"/>
    </ligand>
</feature>
<feature type="binding site" evidence="1">
    <location>
        <begin position="338"/>
        <end position="339"/>
    </location>
    <ligand>
        <name>substrate</name>
    </ligand>
</feature>
<feature type="binding site" evidence="1">
    <location>
        <position position="338"/>
    </location>
    <ligand>
        <name>NAD(+)</name>
        <dbReference type="ChEBI" id="CHEBI:57540"/>
    </ligand>
</feature>
<feature type="binding site" evidence="1">
    <location>
        <position position="367"/>
    </location>
    <ligand>
        <name>NAD(+)</name>
        <dbReference type="ChEBI" id="CHEBI:57540"/>
    </ligand>
</feature>
<accession>Q6FWJ7</accession>